<protein>
    <recommendedName>
        <fullName evidence="1">Small ribosomal subunit protein bS16</fullName>
    </recommendedName>
    <alternativeName>
        <fullName evidence="2">30S ribosomal protein S16</fullName>
    </alternativeName>
</protein>
<evidence type="ECO:0000255" key="1">
    <source>
        <dbReference type="HAMAP-Rule" id="MF_00385"/>
    </source>
</evidence>
<evidence type="ECO:0000305" key="2"/>
<comment type="similarity">
    <text evidence="1">Belongs to the bacterial ribosomal protein bS16 family.</text>
</comment>
<gene>
    <name evidence="1" type="primary">rpsP</name>
    <name type="ordered locus">Hore_07300</name>
</gene>
<name>RS16_HALOH</name>
<dbReference type="EMBL" id="CP001098">
    <property type="protein sequence ID" value="ACL69487.1"/>
    <property type="molecule type" value="Genomic_DNA"/>
</dbReference>
<dbReference type="RefSeq" id="WP_012635675.1">
    <property type="nucleotide sequence ID" value="NC_011899.1"/>
</dbReference>
<dbReference type="SMR" id="B8CW18"/>
<dbReference type="STRING" id="373903.Hore_07300"/>
<dbReference type="KEGG" id="hor:Hore_07300"/>
<dbReference type="eggNOG" id="COG0228">
    <property type="taxonomic scope" value="Bacteria"/>
</dbReference>
<dbReference type="HOGENOM" id="CLU_100590_5_0_9"/>
<dbReference type="OrthoDB" id="9807878at2"/>
<dbReference type="Proteomes" id="UP000000719">
    <property type="component" value="Chromosome"/>
</dbReference>
<dbReference type="GO" id="GO:0005737">
    <property type="term" value="C:cytoplasm"/>
    <property type="evidence" value="ECO:0007669"/>
    <property type="project" value="UniProtKB-ARBA"/>
</dbReference>
<dbReference type="GO" id="GO:0015935">
    <property type="term" value="C:small ribosomal subunit"/>
    <property type="evidence" value="ECO:0007669"/>
    <property type="project" value="TreeGrafter"/>
</dbReference>
<dbReference type="GO" id="GO:0003735">
    <property type="term" value="F:structural constituent of ribosome"/>
    <property type="evidence" value="ECO:0007669"/>
    <property type="project" value="InterPro"/>
</dbReference>
<dbReference type="GO" id="GO:0006412">
    <property type="term" value="P:translation"/>
    <property type="evidence" value="ECO:0007669"/>
    <property type="project" value="UniProtKB-UniRule"/>
</dbReference>
<dbReference type="FunFam" id="3.30.1320.10:FF:000002">
    <property type="entry name" value="30S ribosomal protein S16"/>
    <property type="match status" value="1"/>
</dbReference>
<dbReference type="Gene3D" id="3.30.1320.10">
    <property type="match status" value="1"/>
</dbReference>
<dbReference type="HAMAP" id="MF_00385">
    <property type="entry name" value="Ribosomal_bS16"/>
    <property type="match status" value="1"/>
</dbReference>
<dbReference type="InterPro" id="IPR000307">
    <property type="entry name" value="Ribosomal_bS16"/>
</dbReference>
<dbReference type="InterPro" id="IPR023803">
    <property type="entry name" value="Ribosomal_bS16_dom_sf"/>
</dbReference>
<dbReference type="NCBIfam" id="TIGR00002">
    <property type="entry name" value="S16"/>
    <property type="match status" value="1"/>
</dbReference>
<dbReference type="PANTHER" id="PTHR12919">
    <property type="entry name" value="30S RIBOSOMAL PROTEIN S16"/>
    <property type="match status" value="1"/>
</dbReference>
<dbReference type="PANTHER" id="PTHR12919:SF20">
    <property type="entry name" value="SMALL RIBOSOMAL SUBUNIT PROTEIN BS16M"/>
    <property type="match status" value="1"/>
</dbReference>
<dbReference type="Pfam" id="PF00886">
    <property type="entry name" value="Ribosomal_S16"/>
    <property type="match status" value="1"/>
</dbReference>
<dbReference type="SUPFAM" id="SSF54565">
    <property type="entry name" value="Ribosomal protein S16"/>
    <property type="match status" value="1"/>
</dbReference>
<accession>B8CW18</accession>
<feature type="chain" id="PRO_1000196414" description="Small ribosomal subunit protein bS16">
    <location>
        <begin position="1"/>
        <end position="88"/>
    </location>
</feature>
<proteinExistence type="inferred from homology"/>
<reference key="1">
    <citation type="journal article" date="2009" name="PLoS ONE">
        <title>Genome analysis of the anaerobic thermohalophilic bacterium Halothermothrix orenii.</title>
        <authorList>
            <person name="Mavromatis K."/>
            <person name="Ivanova N."/>
            <person name="Anderson I."/>
            <person name="Lykidis A."/>
            <person name="Hooper S.D."/>
            <person name="Sun H."/>
            <person name="Kunin V."/>
            <person name="Lapidus A."/>
            <person name="Hugenholtz P."/>
            <person name="Patel B."/>
            <person name="Kyrpides N.C."/>
        </authorList>
    </citation>
    <scope>NUCLEOTIDE SEQUENCE [LARGE SCALE GENOMIC DNA]</scope>
    <source>
        <strain>H 168 / OCM 544 / DSM 9562</strain>
    </source>
</reference>
<keyword id="KW-1185">Reference proteome</keyword>
<keyword id="KW-0687">Ribonucleoprotein</keyword>
<keyword id="KW-0689">Ribosomal protein</keyword>
<organism>
    <name type="scientific">Halothermothrix orenii (strain H 168 / OCM 544 / DSM 9562)</name>
    <dbReference type="NCBI Taxonomy" id="373903"/>
    <lineage>
        <taxon>Bacteria</taxon>
        <taxon>Bacillati</taxon>
        <taxon>Bacillota</taxon>
        <taxon>Clostridia</taxon>
        <taxon>Halanaerobiales</taxon>
        <taxon>Halothermotrichaceae</taxon>
        <taxon>Halothermothrix</taxon>
    </lineage>
</organism>
<sequence>MAVKIRLRRMGSKRNAHYRLVVADSRKPRDGRFVEEIGYYNPTTEPATVKVDEEKAIKWLKNGAQPSNTVRSLLKKTGVLAKFREQQQ</sequence>